<keyword id="KW-0150">Chloroplast</keyword>
<keyword id="KW-0934">Plastid</keyword>
<dbReference type="EMBL" id="X65961">
    <property type="protein sequence ID" value="CAA46777.1"/>
    <property type="molecule type" value="Genomic_DNA"/>
</dbReference>
<dbReference type="PIR" id="S27030">
    <property type="entry name" value="S27030"/>
</dbReference>
<dbReference type="GO" id="GO:0009507">
    <property type="term" value="C:chloroplast"/>
    <property type="evidence" value="ECO:0007669"/>
    <property type="project" value="UniProtKB-SubCell"/>
</dbReference>
<name>YCX2_DIALT</name>
<organism>
    <name type="scientific">Diacronema lutheri</name>
    <name type="common">Unicellular marine alga</name>
    <name type="synonym">Monochrysis lutheri</name>
    <dbReference type="NCBI Taxonomy" id="2081491"/>
    <lineage>
        <taxon>Eukaryota</taxon>
        <taxon>Haptista</taxon>
        <taxon>Haptophyta</taxon>
        <taxon>Pavlovales</taxon>
        <taxon>Pavlovaceae</taxon>
        <taxon>Diacronema</taxon>
    </lineage>
</organism>
<reference key="1">
    <citation type="journal article" date="1992" name="Curr. Genet.">
        <title>Identification of a chloroplast-encoded secA gene homologue in a chromophytic alga: possible role in chloroplast protein translocation.</title>
        <authorList>
            <person name="Scaramuzzi C.D."/>
            <person name="Hiller R.G."/>
            <person name="Stokes H.W."/>
        </authorList>
    </citation>
    <scope>NUCLEOTIDE SEQUENCE [GENOMIC DNA]</scope>
</reference>
<proteinExistence type="predicted"/>
<accession>P31954</accession>
<protein>
    <recommendedName>
        <fullName>Uncharacterized 4.8 kDa protein in secA 3'region</fullName>
    </recommendedName>
</protein>
<feature type="chain" id="PRO_0000217522" description="Uncharacterized 4.8 kDa protein in secA 3'region">
    <location>
        <begin position="1"/>
        <end position="42"/>
    </location>
</feature>
<geneLocation type="chloroplast"/>
<comment type="subcellular location">
    <subcellularLocation>
        <location>Plastid</location>
        <location>Chloroplast</location>
    </subcellularLocation>
</comment>
<sequence length="42" mass="4770">MQVEETLLKKKQTINANNILSFNRVAVAPYSYIALTPYGQKI</sequence>